<dbReference type="EMBL" id="CR628337">
    <property type="protein sequence ID" value="CAH14626.1"/>
    <property type="molecule type" value="Genomic_DNA"/>
</dbReference>
<dbReference type="RefSeq" id="WP_011214629.1">
    <property type="nucleotide sequence ID" value="NC_006369.1"/>
</dbReference>
<dbReference type="SMR" id="Q5WZI6"/>
<dbReference type="KEGG" id="lpf:lpl0396"/>
<dbReference type="LegioList" id="lpl0396"/>
<dbReference type="HOGENOM" id="CLU_074407_2_0_6"/>
<dbReference type="Proteomes" id="UP000002517">
    <property type="component" value="Chromosome"/>
</dbReference>
<dbReference type="GO" id="GO:0022625">
    <property type="term" value="C:cytosolic large ribosomal subunit"/>
    <property type="evidence" value="ECO:0007669"/>
    <property type="project" value="TreeGrafter"/>
</dbReference>
<dbReference type="GO" id="GO:0003735">
    <property type="term" value="F:structural constituent of ribosome"/>
    <property type="evidence" value="ECO:0007669"/>
    <property type="project" value="InterPro"/>
</dbReference>
<dbReference type="GO" id="GO:0006412">
    <property type="term" value="P:translation"/>
    <property type="evidence" value="ECO:0007669"/>
    <property type="project" value="UniProtKB-UniRule"/>
</dbReference>
<dbReference type="FunFam" id="3.90.1030.10:FF:000001">
    <property type="entry name" value="50S ribosomal protein L17"/>
    <property type="match status" value="1"/>
</dbReference>
<dbReference type="Gene3D" id="3.90.1030.10">
    <property type="entry name" value="Ribosomal protein L17"/>
    <property type="match status" value="1"/>
</dbReference>
<dbReference type="HAMAP" id="MF_01368">
    <property type="entry name" value="Ribosomal_bL17"/>
    <property type="match status" value="1"/>
</dbReference>
<dbReference type="InterPro" id="IPR000456">
    <property type="entry name" value="Ribosomal_bL17"/>
</dbReference>
<dbReference type="InterPro" id="IPR047859">
    <property type="entry name" value="Ribosomal_bL17_CS"/>
</dbReference>
<dbReference type="InterPro" id="IPR036373">
    <property type="entry name" value="Ribosomal_bL17_sf"/>
</dbReference>
<dbReference type="NCBIfam" id="TIGR00059">
    <property type="entry name" value="L17"/>
    <property type="match status" value="1"/>
</dbReference>
<dbReference type="PANTHER" id="PTHR14413:SF16">
    <property type="entry name" value="LARGE RIBOSOMAL SUBUNIT PROTEIN BL17M"/>
    <property type="match status" value="1"/>
</dbReference>
<dbReference type="PANTHER" id="PTHR14413">
    <property type="entry name" value="RIBOSOMAL PROTEIN L17"/>
    <property type="match status" value="1"/>
</dbReference>
<dbReference type="Pfam" id="PF01196">
    <property type="entry name" value="Ribosomal_L17"/>
    <property type="match status" value="1"/>
</dbReference>
<dbReference type="SUPFAM" id="SSF64263">
    <property type="entry name" value="Prokaryotic ribosomal protein L17"/>
    <property type="match status" value="1"/>
</dbReference>
<dbReference type="PROSITE" id="PS01167">
    <property type="entry name" value="RIBOSOMAL_L17"/>
    <property type="match status" value="1"/>
</dbReference>
<evidence type="ECO:0000255" key="1">
    <source>
        <dbReference type="HAMAP-Rule" id="MF_01368"/>
    </source>
</evidence>
<evidence type="ECO:0000305" key="2"/>
<keyword id="KW-0687">Ribonucleoprotein</keyword>
<keyword id="KW-0689">Ribosomal protein</keyword>
<proteinExistence type="inferred from homology"/>
<comment type="subunit">
    <text evidence="1">Part of the 50S ribosomal subunit. Contacts protein L32.</text>
</comment>
<comment type="similarity">
    <text evidence="1">Belongs to the bacterial ribosomal protein bL17 family.</text>
</comment>
<sequence>MRHRNSGRSFSRTSSHRKAMFSNMCCSLIEHELIRTTLPKAKDLRRYIEPLITVSKSDSVASRRRAFDILRSKSAVGKLFTDLGPRFAKRPGGYIRIIKCGYRDGDNAPMAIVELMDRPVISDDTEE</sequence>
<name>RL17_LEGPL</name>
<reference key="1">
    <citation type="journal article" date="2004" name="Nat. Genet.">
        <title>Evidence in the Legionella pneumophila genome for exploitation of host cell functions and high genome plasticity.</title>
        <authorList>
            <person name="Cazalet C."/>
            <person name="Rusniok C."/>
            <person name="Brueggemann H."/>
            <person name="Zidane N."/>
            <person name="Magnier A."/>
            <person name="Ma L."/>
            <person name="Tichit M."/>
            <person name="Jarraud S."/>
            <person name="Bouchier C."/>
            <person name="Vandenesch F."/>
            <person name="Kunst F."/>
            <person name="Etienne J."/>
            <person name="Glaser P."/>
            <person name="Buchrieser C."/>
        </authorList>
    </citation>
    <scope>NUCLEOTIDE SEQUENCE [LARGE SCALE GENOMIC DNA]</scope>
    <source>
        <strain>Lens</strain>
    </source>
</reference>
<organism>
    <name type="scientific">Legionella pneumophila (strain Lens)</name>
    <dbReference type="NCBI Taxonomy" id="297245"/>
    <lineage>
        <taxon>Bacteria</taxon>
        <taxon>Pseudomonadati</taxon>
        <taxon>Pseudomonadota</taxon>
        <taxon>Gammaproteobacteria</taxon>
        <taxon>Legionellales</taxon>
        <taxon>Legionellaceae</taxon>
        <taxon>Legionella</taxon>
    </lineage>
</organism>
<accession>Q5WZI6</accession>
<feature type="chain" id="PRO_0000267886" description="Large ribosomal subunit protein bL17">
    <location>
        <begin position="1"/>
        <end position="127"/>
    </location>
</feature>
<gene>
    <name evidence="1" type="primary">rplQ</name>
    <name type="ordered locus">lpl0396</name>
</gene>
<protein>
    <recommendedName>
        <fullName evidence="1">Large ribosomal subunit protein bL17</fullName>
    </recommendedName>
    <alternativeName>
        <fullName evidence="2">50S ribosomal protein L17</fullName>
    </alternativeName>
</protein>